<dbReference type="EC" id="1.14.13.122" evidence="5"/>
<dbReference type="EMBL" id="AB021316">
    <property type="protein sequence ID" value="BAA82484.1"/>
    <property type="molecule type" value="mRNA"/>
</dbReference>
<dbReference type="EMBL" id="AF177200">
    <property type="protein sequence ID" value="AAD54323.1"/>
    <property type="molecule type" value="Genomic_DNA"/>
</dbReference>
<dbReference type="EMBL" id="AB030565">
    <property type="protein sequence ID" value="BAA90462.1"/>
    <property type="molecule type" value="Genomic_DNA"/>
</dbReference>
<dbReference type="EMBL" id="AC084807">
    <property type="protein sequence ID" value="AAK43487.1"/>
    <property type="molecule type" value="Genomic_DNA"/>
</dbReference>
<dbReference type="EMBL" id="CP002684">
    <property type="protein sequence ID" value="AEE32034.1"/>
    <property type="molecule type" value="Genomic_DNA"/>
</dbReference>
<dbReference type="EMBL" id="CP002684">
    <property type="protein sequence ID" value="AEE32035.1"/>
    <property type="molecule type" value="Genomic_DNA"/>
</dbReference>
<dbReference type="EMBL" id="CP002684">
    <property type="protein sequence ID" value="AEE32036.1"/>
    <property type="molecule type" value="Genomic_DNA"/>
</dbReference>
<dbReference type="EMBL" id="AY128357">
    <property type="protein sequence ID" value="AAM91560.1"/>
    <property type="molecule type" value="mRNA"/>
</dbReference>
<dbReference type="EMBL" id="BT002075">
    <property type="protein sequence ID" value="AAN72086.1"/>
    <property type="molecule type" value="mRNA"/>
</dbReference>
<dbReference type="EMBL" id="AK228645">
    <property type="protein sequence ID" value="BAF00553.1"/>
    <property type="molecule type" value="mRNA"/>
</dbReference>
<dbReference type="PIR" id="T52458">
    <property type="entry name" value="T52458"/>
</dbReference>
<dbReference type="RefSeq" id="NP_175088.1">
    <molecule id="Q9MBA1-1"/>
    <property type="nucleotide sequence ID" value="NM_103548.5"/>
</dbReference>
<dbReference type="RefSeq" id="NP_973969.1">
    <molecule id="Q9MBA1-2"/>
    <property type="nucleotide sequence ID" value="NM_202240.2"/>
</dbReference>
<dbReference type="RefSeq" id="NP_973970.1">
    <molecule id="Q9MBA1-3"/>
    <property type="nucleotide sequence ID" value="NM_202241.2"/>
</dbReference>
<dbReference type="SMR" id="Q9MBA1"/>
<dbReference type="BioGRID" id="26254">
    <property type="interactions" value="1"/>
</dbReference>
<dbReference type="FunCoup" id="Q9MBA1">
    <property type="interactions" value="840"/>
</dbReference>
<dbReference type="STRING" id="3702.Q9MBA1"/>
<dbReference type="PaxDb" id="3702-AT1G44446.1"/>
<dbReference type="ProteomicsDB" id="239124">
    <molecule id="Q9MBA1-1"/>
</dbReference>
<dbReference type="EnsemblPlants" id="AT1G44446.1">
    <molecule id="Q9MBA1-1"/>
    <property type="protein sequence ID" value="AT1G44446.1"/>
    <property type="gene ID" value="AT1G44446"/>
</dbReference>
<dbReference type="EnsemblPlants" id="AT1G44446.2">
    <molecule id="Q9MBA1-2"/>
    <property type="protein sequence ID" value="AT1G44446.2"/>
    <property type="gene ID" value="AT1G44446"/>
</dbReference>
<dbReference type="EnsemblPlants" id="AT1G44446.3">
    <molecule id="Q9MBA1-3"/>
    <property type="protein sequence ID" value="AT1G44446.3"/>
    <property type="gene ID" value="AT1G44446"/>
</dbReference>
<dbReference type="GeneID" id="841029"/>
<dbReference type="Gramene" id="AT1G44446.1">
    <molecule id="Q9MBA1-1"/>
    <property type="protein sequence ID" value="AT1G44446.1"/>
    <property type="gene ID" value="AT1G44446"/>
</dbReference>
<dbReference type="Gramene" id="AT1G44446.2">
    <molecule id="Q9MBA1-2"/>
    <property type="protein sequence ID" value="AT1G44446.2"/>
    <property type="gene ID" value="AT1G44446"/>
</dbReference>
<dbReference type="Gramene" id="AT1G44446.3">
    <molecule id="Q9MBA1-3"/>
    <property type="protein sequence ID" value="AT1G44446.3"/>
    <property type="gene ID" value="AT1G44446"/>
</dbReference>
<dbReference type="KEGG" id="ath:AT1G44446"/>
<dbReference type="Araport" id="AT1G44446"/>
<dbReference type="TAIR" id="AT1G44446">
    <property type="gene designation" value="CH1"/>
</dbReference>
<dbReference type="eggNOG" id="ENOG502QS20">
    <property type="taxonomic scope" value="Eukaryota"/>
</dbReference>
<dbReference type="HOGENOM" id="CLU_027465_1_0_1"/>
<dbReference type="InParanoid" id="Q9MBA1"/>
<dbReference type="OrthoDB" id="426882at2759"/>
<dbReference type="PhylomeDB" id="Q9MBA1"/>
<dbReference type="BioCyc" id="ARA:AT1G44446-MONOMER"/>
<dbReference type="BioCyc" id="MetaCyc:AT1G44446-MONOMER"/>
<dbReference type="BRENDA" id="1.14.13.122">
    <property type="organism ID" value="399"/>
</dbReference>
<dbReference type="UniPathway" id="UPA00668"/>
<dbReference type="PRO" id="PR:Q9MBA1"/>
<dbReference type="Proteomes" id="UP000006548">
    <property type="component" value="Chromosome 1"/>
</dbReference>
<dbReference type="ExpressionAtlas" id="Q9MBA1">
    <property type="expression patterns" value="baseline and differential"/>
</dbReference>
<dbReference type="GO" id="GO:0009507">
    <property type="term" value="C:chloroplast"/>
    <property type="evidence" value="ECO:0000314"/>
    <property type="project" value="TAIR"/>
</dbReference>
<dbReference type="GO" id="GO:0009706">
    <property type="term" value="C:chloroplast inner membrane"/>
    <property type="evidence" value="ECO:0000314"/>
    <property type="project" value="TAIR"/>
</dbReference>
<dbReference type="GO" id="GO:0009535">
    <property type="term" value="C:chloroplast thylakoid membrane"/>
    <property type="evidence" value="ECO:0007669"/>
    <property type="project" value="UniProtKB-SubCell"/>
</dbReference>
<dbReference type="GO" id="GO:0042651">
    <property type="term" value="C:thylakoid membrane"/>
    <property type="evidence" value="ECO:0000314"/>
    <property type="project" value="TAIR"/>
</dbReference>
<dbReference type="GO" id="GO:0051537">
    <property type="term" value="F:2 iron, 2 sulfur cluster binding"/>
    <property type="evidence" value="ECO:0007669"/>
    <property type="project" value="UniProtKB-KW"/>
</dbReference>
<dbReference type="GO" id="GO:0010277">
    <property type="term" value="F:chlorophyllide a oxygenase activity"/>
    <property type="evidence" value="ECO:0000314"/>
    <property type="project" value="TAIR"/>
</dbReference>
<dbReference type="GO" id="GO:0005506">
    <property type="term" value="F:iron ion binding"/>
    <property type="evidence" value="ECO:0007669"/>
    <property type="project" value="InterPro"/>
</dbReference>
<dbReference type="GO" id="GO:0015995">
    <property type="term" value="P:chlorophyll biosynthetic process"/>
    <property type="evidence" value="ECO:0000315"/>
    <property type="project" value="TAIR"/>
</dbReference>
<dbReference type="CDD" id="cd04337">
    <property type="entry name" value="Rieske_RO_Alpha_Cao"/>
    <property type="match status" value="1"/>
</dbReference>
<dbReference type="FunFam" id="3.90.380.10:FF:000006">
    <property type="entry name" value="Chlorophyllide a oxygenase, chloroplastic"/>
    <property type="match status" value="1"/>
</dbReference>
<dbReference type="Gene3D" id="3.90.380.10">
    <property type="entry name" value="Naphthalene 1,2-dioxygenase Alpha Subunit, Chain A, domain 1"/>
    <property type="match status" value="1"/>
</dbReference>
<dbReference type="Gene3D" id="2.102.10.10">
    <property type="entry name" value="Rieske [2Fe-2S] iron-sulphur domain"/>
    <property type="match status" value="1"/>
</dbReference>
<dbReference type="InterPro" id="IPR050584">
    <property type="entry name" value="Cholesterol_7-desaturase"/>
</dbReference>
<dbReference type="InterPro" id="IPR013626">
    <property type="entry name" value="PaO"/>
</dbReference>
<dbReference type="InterPro" id="IPR017941">
    <property type="entry name" value="Rieske_2Fe-2S"/>
</dbReference>
<dbReference type="InterPro" id="IPR036922">
    <property type="entry name" value="Rieske_2Fe-2S_sf"/>
</dbReference>
<dbReference type="InterPro" id="IPR015881">
    <property type="entry name" value="Ring-hydroxy_dOase_2Fe2S_BS"/>
</dbReference>
<dbReference type="PANTHER" id="PTHR21266:SF19">
    <property type="entry name" value="CHLOROPHYLLIDE A OXYGENASE, CHLOROPLASTIC"/>
    <property type="match status" value="1"/>
</dbReference>
<dbReference type="PANTHER" id="PTHR21266">
    <property type="entry name" value="IRON-SULFUR DOMAIN CONTAINING PROTEIN"/>
    <property type="match status" value="1"/>
</dbReference>
<dbReference type="Pfam" id="PF08417">
    <property type="entry name" value="PaO"/>
    <property type="match status" value="1"/>
</dbReference>
<dbReference type="Pfam" id="PF00355">
    <property type="entry name" value="Rieske"/>
    <property type="match status" value="1"/>
</dbReference>
<dbReference type="SUPFAM" id="SSF55961">
    <property type="entry name" value="Bet v1-like"/>
    <property type="match status" value="1"/>
</dbReference>
<dbReference type="SUPFAM" id="SSF50022">
    <property type="entry name" value="ISP domain"/>
    <property type="match status" value="1"/>
</dbReference>
<dbReference type="PROSITE" id="PS51296">
    <property type="entry name" value="RIESKE"/>
    <property type="match status" value="1"/>
</dbReference>
<reference key="1">
    <citation type="journal article" date="1999" name="Nature">
        <title>Chlorophyll b and phycobilins in the common ancestor of cyanobacteria and chloroplasts.</title>
        <authorList>
            <person name="Tomitani A."/>
            <person name="Okada K."/>
            <person name="Miyashita H."/>
            <person name="Matthijs H.C.P."/>
            <person name="Ohno T."/>
            <person name="Tanaka A."/>
        </authorList>
    </citation>
    <scope>NUCLEOTIDE SEQUENCE [MRNA] (ISOFORM 1)</scope>
</reference>
<reference key="2">
    <citation type="journal article" date="1999" name="Proc. Natl. Acad. Sci. U.S.A.">
        <title>The AtCAO gene, encoding chlorophyll a oxygenase, is required for chlorophyll b synthesis in Arabidopsis thaliana.</title>
        <authorList>
            <person name="Espineda C.E."/>
            <person name="Linford A.S."/>
            <person name="Devine D."/>
            <person name="Brusslan J.A."/>
        </authorList>
    </citation>
    <scope>NUCLEOTIDE SEQUENCE [GENOMIC DNA] (ISOFORM 1)</scope>
    <scope>MUTANTS CHL-2 AND CHL-3</scope>
    <scope>INDUCTION</scope>
    <source>
        <strain>cv. Columbia</strain>
    </source>
</reference>
<reference key="3">
    <citation type="journal article" date="2000" name="Plant J.">
        <title>Cloning and functional expression of the gene encoding the key enzyme for chlorophyll b biosynthesis (CAO) from Arabidopsis thaliana.</title>
        <authorList>
            <person name="Oster U."/>
            <person name="Tanaka R."/>
            <person name="Tanaka A."/>
            <person name="Ruediger W."/>
        </authorList>
    </citation>
    <scope>NUCLEOTIDE SEQUENCE [GENOMIC DNA] (ISOFORM 1)</scope>
    <scope>FUNCTION</scope>
    <scope>CATALYTIC ACTIVITY</scope>
</reference>
<reference key="4">
    <citation type="journal article" date="2000" name="Nature">
        <title>Sequence and analysis of chromosome 1 of the plant Arabidopsis thaliana.</title>
        <authorList>
            <person name="Theologis A."/>
            <person name="Ecker J.R."/>
            <person name="Palm C.J."/>
            <person name="Federspiel N.A."/>
            <person name="Kaul S."/>
            <person name="White O."/>
            <person name="Alonso J."/>
            <person name="Altafi H."/>
            <person name="Araujo R."/>
            <person name="Bowman C.L."/>
            <person name="Brooks S.Y."/>
            <person name="Buehler E."/>
            <person name="Chan A."/>
            <person name="Chao Q."/>
            <person name="Chen H."/>
            <person name="Cheuk R.F."/>
            <person name="Chin C.W."/>
            <person name="Chung M.K."/>
            <person name="Conn L."/>
            <person name="Conway A.B."/>
            <person name="Conway A.R."/>
            <person name="Creasy T.H."/>
            <person name="Dewar K."/>
            <person name="Dunn P."/>
            <person name="Etgu P."/>
            <person name="Feldblyum T.V."/>
            <person name="Feng J.-D."/>
            <person name="Fong B."/>
            <person name="Fujii C.Y."/>
            <person name="Gill J.E."/>
            <person name="Goldsmith A.D."/>
            <person name="Haas B."/>
            <person name="Hansen N.F."/>
            <person name="Hughes B."/>
            <person name="Huizar L."/>
            <person name="Hunter J.L."/>
            <person name="Jenkins J."/>
            <person name="Johnson-Hopson C."/>
            <person name="Khan S."/>
            <person name="Khaykin E."/>
            <person name="Kim C.J."/>
            <person name="Koo H.L."/>
            <person name="Kremenetskaia I."/>
            <person name="Kurtz D.B."/>
            <person name="Kwan A."/>
            <person name="Lam B."/>
            <person name="Langin-Hooper S."/>
            <person name="Lee A."/>
            <person name="Lee J.M."/>
            <person name="Lenz C.A."/>
            <person name="Li J.H."/>
            <person name="Li Y.-P."/>
            <person name="Lin X."/>
            <person name="Liu S.X."/>
            <person name="Liu Z.A."/>
            <person name="Luros J.S."/>
            <person name="Maiti R."/>
            <person name="Marziali A."/>
            <person name="Militscher J."/>
            <person name="Miranda M."/>
            <person name="Nguyen M."/>
            <person name="Nierman W.C."/>
            <person name="Osborne B.I."/>
            <person name="Pai G."/>
            <person name="Peterson J."/>
            <person name="Pham P.K."/>
            <person name="Rizzo M."/>
            <person name="Rooney T."/>
            <person name="Rowley D."/>
            <person name="Sakano H."/>
            <person name="Salzberg S.L."/>
            <person name="Schwartz J.R."/>
            <person name="Shinn P."/>
            <person name="Southwick A.M."/>
            <person name="Sun H."/>
            <person name="Tallon L.J."/>
            <person name="Tambunga G."/>
            <person name="Toriumi M.J."/>
            <person name="Town C.D."/>
            <person name="Utterback T."/>
            <person name="Van Aken S."/>
            <person name="Vaysberg M."/>
            <person name="Vysotskaia V.S."/>
            <person name="Walker M."/>
            <person name="Wu D."/>
            <person name="Yu G."/>
            <person name="Fraser C.M."/>
            <person name="Venter J.C."/>
            <person name="Davis R.W."/>
        </authorList>
    </citation>
    <scope>NUCLEOTIDE SEQUENCE [LARGE SCALE GENOMIC DNA]</scope>
    <source>
        <strain>cv. Columbia</strain>
    </source>
</reference>
<reference key="5">
    <citation type="journal article" date="2017" name="Plant J.">
        <title>Araport11: a complete reannotation of the Arabidopsis thaliana reference genome.</title>
        <authorList>
            <person name="Cheng C.Y."/>
            <person name="Krishnakumar V."/>
            <person name="Chan A.P."/>
            <person name="Thibaud-Nissen F."/>
            <person name="Schobel S."/>
            <person name="Town C.D."/>
        </authorList>
    </citation>
    <scope>GENOME REANNOTATION</scope>
    <source>
        <strain>cv. Columbia</strain>
    </source>
</reference>
<reference key="6">
    <citation type="journal article" date="2003" name="Science">
        <title>Empirical analysis of transcriptional activity in the Arabidopsis genome.</title>
        <authorList>
            <person name="Yamada K."/>
            <person name="Lim J."/>
            <person name="Dale J.M."/>
            <person name="Chen H."/>
            <person name="Shinn P."/>
            <person name="Palm C.J."/>
            <person name="Southwick A.M."/>
            <person name="Wu H.C."/>
            <person name="Kim C.J."/>
            <person name="Nguyen M."/>
            <person name="Pham P.K."/>
            <person name="Cheuk R.F."/>
            <person name="Karlin-Newmann G."/>
            <person name="Liu S.X."/>
            <person name="Lam B."/>
            <person name="Sakano H."/>
            <person name="Wu T."/>
            <person name="Yu G."/>
            <person name="Miranda M."/>
            <person name="Quach H.L."/>
            <person name="Tripp M."/>
            <person name="Chang C.H."/>
            <person name="Lee J.M."/>
            <person name="Toriumi M.J."/>
            <person name="Chan M.M."/>
            <person name="Tang C.C."/>
            <person name="Onodera C.S."/>
            <person name="Deng J.M."/>
            <person name="Akiyama K."/>
            <person name="Ansari Y."/>
            <person name="Arakawa T."/>
            <person name="Banh J."/>
            <person name="Banno F."/>
            <person name="Bowser L."/>
            <person name="Brooks S.Y."/>
            <person name="Carninci P."/>
            <person name="Chao Q."/>
            <person name="Choy N."/>
            <person name="Enju A."/>
            <person name="Goldsmith A.D."/>
            <person name="Gurjal M."/>
            <person name="Hansen N.F."/>
            <person name="Hayashizaki Y."/>
            <person name="Johnson-Hopson C."/>
            <person name="Hsuan V.W."/>
            <person name="Iida K."/>
            <person name="Karnes M."/>
            <person name="Khan S."/>
            <person name="Koesema E."/>
            <person name="Ishida J."/>
            <person name="Jiang P.X."/>
            <person name="Jones T."/>
            <person name="Kawai J."/>
            <person name="Kamiya A."/>
            <person name="Meyers C."/>
            <person name="Nakajima M."/>
            <person name="Narusaka M."/>
            <person name="Seki M."/>
            <person name="Sakurai T."/>
            <person name="Satou M."/>
            <person name="Tamse R."/>
            <person name="Vaysberg M."/>
            <person name="Wallender E.K."/>
            <person name="Wong C."/>
            <person name="Yamamura Y."/>
            <person name="Yuan S."/>
            <person name="Shinozaki K."/>
            <person name="Davis R.W."/>
            <person name="Theologis A."/>
            <person name="Ecker J.R."/>
        </authorList>
    </citation>
    <scope>NUCLEOTIDE SEQUENCE [LARGE SCALE MRNA] (ISOFORM 1)</scope>
    <source>
        <strain>cv. Columbia</strain>
    </source>
</reference>
<reference key="7">
    <citation type="submission" date="2006-07" db="EMBL/GenBank/DDBJ databases">
        <title>Large-scale analysis of RIKEN Arabidopsis full-length (RAFL) cDNAs.</title>
        <authorList>
            <person name="Totoki Y."/>
            <person name="Seki M."/>
            <person name="Ishida J."/>
            <person name="Nakajima M."/>
            <person name="Enju A."/>
            <person name="Kamiya A."/>
            <person name="Narusaka M."/>
            <person name="Shin-i T."/>
            <person name="Nakagawa M."/>
            <person name="Sakamoto N."/>
            <person name="Oishi K."/>
            <person name="Kohara Y."/>
            <person name="Kobayashi M."/>
            <person name="Toyoda A."/>
            <person name="Sakaki Y."/>
            <person name="Sakurai T."/>
            <person name="Iida K."/>
            <person name="Akiyama K."/>
            <person name="Satou M."/>
            <person name="Toyoda T."/>
            <person name="Konagaya A."/>
            <person name="Carninci P."/>
            <person name="Kawai J."/>
            <person name="Hayashizaki Y."/>
            <person name="Shinozaki K."/>
        </authorList>
    </citation>
    <scope>NUCLEOTIDE SEQUENCE [LARGE SCALE MRNA] (ISOFORM 1)</scope>
    <source>
        <strain>cv. Columbia</strain>
    </source>
</reference>
<reference key="8">
    <citation type="journal article" date="2004" name="Planta">
        <title>Domain structures of chlorophyllide a oxygenase of green plants and Prochlorothrix hollandica in relation to catalytic functions.</title>
        <authorList>
            <person name="Nagata N."/>
            <person name="Satoh S."/>
            <person name="Tanaka R."/>
            <person name="Tanaka A."/>
        </authorList>
    </citation>
    <scope>CHARACTERIZATION</scope>
</reference>
<reference key="9">
    <citation type="journal article" date="2004" name="BMC Plant Biol.">
        <title>Synthesis of chlorophyll b: localization of chlorophyllide a oxygenase and discovery of a stable radical in the catalytic subunit.</title>
        <authorList>
            <person name="Eggink L.L."/>
            <person name="LoBrutto R."/>
            <person name="Brune D.C."/>
            <person name="Brusslan J."/>
            <person name="Yamasato A."/>
            <person name="Tanaka A."/>
            <person name="Hoober J.K."/>
        </authorList>
    </citation>
    <scope>SUBCELLULAR LOCATION</scope>
</reference>
<reference key="10">
    <citation type="journal article" date="2005" name="Plant Cell">
        <title>The N-terminal domain of chlorophyllide a oxygenase confers protein instability in response to chlorophyll b accumulation in Arabidopsis.</title>
        <authorList>
            <person name="Yamasato A."/>
            <person name="Nagata N."/>
            <person name="Tanaka R."/>
            <person name="Tanaka A."/>
        </authorList>
    </citation>
    <scope>CHARACTERIZATION</scope>
    <scope>SUBCELLULAR LOCATION</scope>
</reference>
<reference key="11">
    <citation type="journal article" date="2009" name="J. Biol. Chem.">
        <title>Determination of a chloroplast degron in the regulatory domain of chlorophyllide a oxygenase.</title>
        <authorList>
            <person name="Sakuraba Y."/>
            <person name="Tanaka R."/>
            <person name="Yamasato A."/>
            <person name="Tanaka A."/>
        </authorList>
    </citation>
    <scope>MUTAGENESIS OF 97-GLN--HIS-106</scope>
</reference>
<feature type="transit peptide" description="Chloroplast" evidence="2">
    <location>
        <begin position="1"/>
        <end position="36"/>
    </location>
</feature>
<feature type="chain" id="PRO_0000045788" description="Chlorophyllide a oxygenase, chloroplastic">
    <location>
        <begin position="37"/>
        <end position="536"/>
    </location>
</feature>
<feature type="domain" description="Rieske" evidence="3">
    <location>
        <begin position="221"/>
        <end position="321"/>
    </location>
</feature>
<feature type="coiled-coil region" evidence="2">
    <location>
        <begin position="123"/>
        <end position="150"/>
    </location>
</feature>
<feature type="binding site" evidence="3">
    <location>
        <position position="262"/>
    </location>
    <ligand>
        <name>[2Fe-2S] cluster</name>
        <dbReference type="ChEBI" id="CHEBI:190135"/>
    </ligand>
</feature>
<feature type="binding site" evidence="3">
    <location>
        <position position="264"/>
    </location>
    <ligand>
        <name>[2Fe-2S] cluster</name>
        <dbReference type="ChEBI" id="CHEBI:190135"/>
    </ligand>
</feature>
<feature type="binding site" evidence="3">
    <location>
        <position position="281"/>
    </location>
    <ligand>
        <name>[2Fe-2S] cluster</name>
        <dbReference type="ChEBI" id="CHEBI:190135"/>
    </ligand>
</feature>
<feature type="binding site" evidence="3">
    <location>
        <position position="284"/>
    </location>
    <ligand>
        <name>[2Fe-2S] cluster</name>
        <dbReference type="ChEBI" id="CHEBI:190135"/>
    </ligand>
</feature>
<feature type="binding site" evidence="1">
    <location>
        <position position="360"/>
    </location>
    <ligand>
        <name>Fe cation</name>
        <dbReference type="ChEBI" id="CHEBI:24875"/>
    </ligand>
</feature>
<feature type="binding site" evidence="1">
    <location>
        <position position="364"/>
    </location>
    <ligand>
        <name>Fe cation</name>
        <dbReference type="ChEBI" id="CHEBI:24875"/>
    </ligand>
</feature>
<feature type="binding site" evidence="1">
    <location>
        <position position="367"/>
    </location>
    <ligand>
        <name>Fe cation</name>
        <dbReference type="ChEBI" id="CHEBI:24875"/>
    </ligand>
</feature>
<feature type="binding site" evidence="1">
    <location>
        <position position="372"/>
    </location>
    <ligand>
        <name>Fe cation</name>
        <dbReference type="ChEBI" id="CHEBI:24875"/>
    </ligand>
</feature>
<feature type="splice variant" id="VSP_017071" description="In isoform 3." evidence="8">
    <original>SLVKFLTPTSGLQGYWDPYPIDMEFKPPCIVLSTIGISKPGKLEGKSTQQ</original>
    <variation>RFLLTLITLFSAKMKLGLSFLFLVLQFGEVFNTYLGSPRILGSISNRYGI</variation>
    <location>
        <begin position="384"/>
        <end position="433"/>
    </location>
</feature>
<feature type="splice variant" id="VSP_017072" description="In isoform 3." evidence="8">
    <location>
        <begin position="434"/>
        <end position="536"/>
    </location>
</feature>
<feature type="splice variant" id="VSP_017073" description="In isoform 2." evidence="8">
    <original>LNEDLRLVLGQQERMLNGANIWNLPVAY</original>
    <variation>KVHHKWIDHLQPSSQSCFLSYRFYISRS</variation>
    <location>
        <begin position="484"/>
        <end position="511"/>
    </location>
</feature>
<feature type="splice variant" id="VSP_017074" description="In isoform 2." evidence="8">
    <location>
        <begin position="512"/>
        <end position="536"/>
    </location>
</feature>
<feature type="mutagenesis site" description="Increased stability of the protein." evidence="7">
    <location>
        <begin position="97"/>
        <end position="106"/>
    </location>
</feature>
<feature type="mutagenesis site" description="In chl-2; reduced level of chlorophyll b.">
    <original>V</original>
    <variation>E</variation>
    <location>
        <position position="274"/>
    </location>
</feature>
<feature type="mutagenesis site" description="In chl-3; reduced level of chlorophyll b.">
    <original>SL</original>
    <variation>VA</variation>
    <location>
        <begin position="334"/>
        <end position="335"/>
    </location>
</feature>
<feature type="mutagenesis site" description="In chl-3; absence of chlorophyll b.">
    <location>
        <begin position="336"/>
        <end position="375"/>
    </location>
</feature>
<feature type="sequence conflict" description="In Ref. 2; AAD54323." evidence="8" ref="2">
    <original>P</original>
    <variation>R</variation>
    <location>
        <position position="115"/>
    </location>
</feature>
<feature type="sequence conflict" description="In Ref. 1; BAA82484." evidence="8" ref="1">
    <original>L</original>
    <variation>F</variation>
    <location>
        <position position="438"/>
    </location>
</feature>
<feature type="sequence conflict" description="In Ref. 1; BAA82484." evidence="8" ref="1">
    <original>Y</original>
    <variation>C</variation>
    <location>
        <position position="456"/>
    </location>
</feature>
<gene>
    <name type="primary">CAO</name>
    <name type="synonym">CHL</name>
    <name type="ordered locus">At1g44446</name>
    <name type="ORF">T18F15.7</name>
</gene>
<name>CAO_ARATH</name>
<comment type="function">
    <text evidence="5">Catalyzes a two-step oxygenase reaction involved in the synthesis of chlorophyll b. Acts specifically on the non-esterified chlorophyllide a and not on chlorophyll a.</text>
</comment>
<comment type="catalytic activity">
    <reaction evidence="5">
        <text>chlorophyllide a + 2 NADPH + 2 O2 + 2 H(+) = chlorophyllide b + 2 NADP(+) + 3 H2O</text>
        <dbReference type="Rhea" id="RHEA:30359"/>
        <dbReference type="ChEBI" id="CHEBI:15377"/>
        <dbReference type="ChEBI" id="CHEBI:15378"/>
        <dbReference type="ChEBI" id="CHEBI:15379"/>
        <dbReference type="ChEBI" id="CHEBI:57783"/>
        <dbReference type="ChEBI" id="CHEBI:58349"/>
        <dbReference type="ChEBI" id="CHEBI:83348"/>
        <dbReference type="ChEBI" id="CHEBI:83356"/>
        <dbReference type="EC" id="1.14.13.122"/>
    </reaction>
</comment>
<comment type="pathway">
    <text>Porphyrin-containing compound metabolism; chlorophyll biosynthesis.</text>
</comment>
<comment type="subcellular location">
    <subcellularLocation>
        <location evidence="6">Plastid</location>
        <location evidence="6">Chloroplast membrane</location>
        <topology>Peripheral membrane protein</topology>
    </subcellularLocation>
    <subcellularLocation>
        <location evidence="6">Plastid</location>
        <location evidence="6">Chloroplast thylakoid membrane</location>
        <topology>Peripheral membrane protein</topology>
    </subcellularLocation>
</comment>
<comment type="alternative products">
    <event type="alternative splicing"/>
    <isoform>
        <id>Q9MBA1-1</id>
        <name>1</name>
        <sequence type="displayed"/>
    </isoform>
    <isoform>
        <id>Q9MBA1-2</id>
        <name>2</name>
        <sequence type="described" ref="VSP_017073 VSP_017074"/>
    </isoform>
    <isoform>
        <id>Q9MBA1-3</id>
        <name>3</name>
        <sequence type="described" ref="VSP_017071 VSP_017072"/>
    </isoform>
</comment>
<comment type="induction">
    <text evidence="4">By light. Probable feedback regulation.</text>
</comment>
<comment type="domain">
    <text>Consists of three domains A, B and C. The C-terminal C domain possesses catalytic function while the N-terminal A domain confers protein instability in response to chlorophyll b accumulation.</text>
</comment>
<keyword id="KW-0001">2Fe-2S</keyword>
<keyword id="KW-0025">Alternative splicing</keyword>
<keyword id="KW-0149">Chlorophyll biosynthesis</keyword>
<keyword id="KW-0150">Chloroplast</keyword>
<keyword id="KW-0175">Coiled coil</keyword>
<keyword id="KW-0408">Iron</keyword>
<keyword id="KW-0411">Iron-sulfur</keyword>
<keyword id="KW-0472">Membrane</keyword>
<keyword id="KW-0479">Metal-binding</keyword>
<keyword id="KW-0521">NADP</keyword>
<keyword id="KW-0560">Oxidoreductase</keyword>
<keyword id="KW-0934">Plastid</keyword>
<keyword id="KW-1185">Reference proteome</keyword>
<keyword id="KW-0793">Thylakoid</keyword>
<keyword id="KW-0809">Transit peptide</keyword>
<protein>
    <recommendedName>
        <fullName>Chlorophyllide a oxygenase, chloroplastic</fullName>
        <shortName>Chlorophyll a oxygenase</shortName>
        <ecNumber evidence="5">1.14.13.122</ecNumber>
    </recommendedName>
    <alternativeName>
        <fullName>Chlorophyll b synthase</fullName>
        <shortName>AtCAO</shortName>
    </alternativeName>
</protein>
<proteinExistence type="evidence at protein level"/>
<organism>
    <name type="scientific">Arabidopsis thaliana</name>
    <name type="common">Mouse-ear cress</name>
    <dbReference type="NCBI Taxonomy" id="3702"/>
    <lineage>
        <taxon>Eukaryota</taxon>
        <taxon>Viridiplantae</taxon>
        <taxon>Streptophyta</taxon>
        <taxon>Embryophyta</taxon>
        <taxon>Tracheophyta</taxon>
        <taxon>Spermatophyta</taxon>
        <taxon>Magnoliopsida</taxon>
        <taxon>eudicotyledons</taxon>
        <taxon>Gunneridae</taxon>
        <taxon>Pentapetalae</taxon>
        <taxon>rosids</taxon>
        <taxon>malvids</taxon>
        <taxon>Brassicales</taxon>
        <taxon>Brassicaceae</taxon>
        <taxon>Camelineae</taxon>
        <taxon>Arabidopsis</taxon>
    </lineage>
</organism>
<evidence type="ECO:0000250" key="1"/>
<evidence type="ECO:0000255" key="2"/>
<evidence type="ECO:0000255" key="3">
    <source>
        <dbReference type="PROSITE-ProRule" id="PRU00628"/>
    </source>
</evidence>
<evidence type="ECO:0000269" key="4">
    <source>
    </source>
</evidence>
<evidence type="ECO:0000269" key="5">
    <source>
    </source>
</evidence>
<evidence type="ECO:0000269" key="6">
    <source>
    </source>
</evidence>
<evidence type="ECO:0000269" key="7">
    <source>
    </source>
</evidence>
<evidence type="ECO:0000305" key="8"/>
<sequence>MNAAVFSPSALSLPISFSKTRSSFLSRKKGVKGEFRVFAVFGDESGLVEKKSQWRPLFDVEDPRSKAPPYKGKFLDVNQAIEVARFDIQYLDWRARQDLLTIMILHDKVVDVLNPLAREYKSIGTVKKELAGLQEELSKAHQQVHISEARVSTALDKLAHMEELVNDRLLPGRVVTELDKPSSSTTASAVELDREKTNTGAKSLNVSGPVPPYSPHLKNFWYPVAFTADLKHDTMVPIECFEQPWVIFRGEDGKPGCVRNTCAHRACPLDLGTVNEGRIQCPYHGWEYSTDGECKKMPSTKLLKVKIKSLPCLEQEGMIWIWPGDEPPAPILPSLQPPSGFLIHAELVMDLPVEHGLLLDNLLDLAHAPFTHTSTFAKGWSVPSLVKFLTPTSGLQGYWDPYPIDMEFKPPCIVLSTIGISKPGKLEGKSTQQCATHLHQLHVCLPSSKNKTRLLYRMSLDFAPILKNLPFMEHLWRHFAEQVLNEDLRLVLGQQERMLNGANIWNLPVAYDKLGVRYRLWRNAVDRGDDKLPFSG</sequence>
<accession>Q9MBA1</accession>
<accession>Q0WQP6</accession>
<accession>Q3ECX2</accession>
<accession>Q3ECX3</accession>
<accession>Q9SPF2</accession>
<accession>Q9XJ37</accession>